<gene>
    <name evidence="1" type="primary">pth</name>
    <name type="ordered locus">Bcep18194_A6134</name>
</gene>
<feature type="chain" id="PRO_0000264013" description="Peptidyl-tRNA hydrolase">
    <location>
        <begin position="1"/>
        <end position="199"/>
    </location>
</feature>
<feature type="active site" description="Proton acceptor" evidence="1">
    <location>
        <position position="20"/>
    </location>
</feature>
<feature type="binding site" evidence="1">
    <location>
        <position position="15"/>
    </location>
    <ligand>
        <name>tRNA</name>
        <dbReference type="ChEBI" id="CHEBI:17843"/>
    </ligand>
</feature>
<feature type="binding site" evidence="1">
    <location>
        <position position="66"/>
    </location>
    <ligand>
        <name>tRNA</name>
        <dbReference type="ChEBI" id="CHEBI:17843"/>
    </ligand>
</feature>
<feature type="binding site" evidence="1">
    <location>
        <position position="68"/>
    </location>
    <ligand>
        <name>tRNA</name>
        <dbReference type="ChEBI" id="CHEBI:17843"/>
    </ligand>
</feature>
<feature type="binding site" evidence="1">
    <location>
        <position position="114"/>
    </location>
    <ligand>
        <name>tRNA</name>
        <dbReference type="ChEBI" id="CHEBI:17843"/>
    </ligand>
</feature>
<feature type="site" description="Discriminates between blocked and unblocked aminoacyl-tRNA" evidence="1">
    <location>
        <position position="10"/>
    </location>
</feature>
<feature type="site" description="Stabilizes the basic form of H active site to accept a proton" evidence="1">
    <location>
        <position position="93"/>
    </location>
</feature>
<dbReference type="EC" id="3.1.1.29" evidence="1"/>
<dbReference type="EMBL" id="CP000151">
    <property type="protein sequence ID" value="ABB09728.1"/>
    <property type="molecule type" value="Genomic_DNA"/>
</dbReference>
<dbReference type="RefSeq" id="WP_006477776.1">
    <property type="nucleotide sequence ID" value="NZ_WNDV01000010.1"/>
</dbReference>
<dbReference type="SMR" id="Q39CT8"/>
<dbReference type="GeneID" id="83049600"/>
<dbReference type="KEGG" id="bur:Bcep18194_A6134"/>
<dbReference type="HOGENOM" id="CLU_062456_3_1_4"/>
<dbReference type="Proteomes" id="UP000002705">
    <property type="component" value="Chromosome 1"/>
</dbReference>
<dbReference type="GO" id="GO:0005737">
    <property type="term" value="C:cytoplasm"/>
    <property type="evidence" value="ECO:0007669"/>
    <property type="project" value="UniProtKB-SubCell"/>
</dbReference>
<dbReference type="GO" id="GO:0004045">
    <property type="term" value="F:peptidyl-tRNA hydrolase activity"/>
    <property type="evidence" value="ECO:0007669"/>
    <property type="project" value="UniProtKB-UniRule"/>
</dbReference>
<dbReference type="GO" id="GO:0000049">
    <property type="term" value="F:tRNA binding"/>
    <property type="evidence" value="ECO:0007669"/>
    <property type="project" value="UniProtKB-UniRule"/>
</dbReference>
<dbReference type="GO" id="GO:0006515">
    <property type="term" value="P:protein quality control for misfolded or incompletely synthesized proteins"/>
    <property type="evidence" value="ECO:0007669"/>
    <property type="project" value="UniProtKB-UniRule"/>
</dbReference>
<dbReference type="GO" id="GO:0072344">
    <property type="term" value="P:rescue of stalled ribosome"/>
    <property type="evidence" value="ECO:0007669"/>
    <property type="project" value="UniProtKB-UniRule"/>
</dbReference>
<dbReference type="CDD" id="cd00462">
    <property type="entry name" value="PTH"/>
    <property type="match status" value="1"/>
</dbReference>
<dbReference type="FunFam" id="3.40.50.1470:FF:000001">
    <property type="entry name" value="Peptidyl-tRNA hydrolase"/>
    <property type="match status" value="1"/>
</dbReference>
<dbReference type="Gene3D" id="3.40.50.1470">
    <property type="entry name" value="Peptidyl-tRNA hydrolase"/>
    <property type="match status" value="1"/>
</dbReference>
<dbReference type="HAMAP" id="MF_00083">
    <property type="entry name" value="Pept_tRNA_hydro_bact"/>
    <property type="match status" value="1"/>
</dbReference>
<dbReference type="InterPro" id="IPR001328">
    <property type="entry name" value="Pept_tRNA_hydro"/>
</dbReference>
<dbReference type="InterPro" id="IPR018171">
    <property type="entry name" value="Pept_tRNA_hydro_CS"/>
</dbReference>
<dbReference type="InterPro" id="IPR036416">
    <property type="entry name" value="Pept_tRNA_hydro_sf"/>
</dbReference>
<dbReference type="NCBIfam" id="TIGR00447">
    <property type="entry name" value="pth"/>
    <property type="match status" value="1"/>
</dbReference>
<dbReference type="PANTHER" id="PTHR17224">
    <property type="entry name" value="PEPTIDYL-TRNA HYDROLASE"/>
    <property type="match status" value="1"/>
</dbReference>
<dbReference type="PANTHER" id="PTHR17224:SF1">
    <property type="entry name" value="PEPTIDYL-TRNA HYDROLASE"/>
    <property type="match status" value="1"/>
</dbReference>
<dbReference type="Pfam" id="PF01195">
    <property type="entry name" value="Pept_tRNA_hydro"/>
    <property type="match status" value="1"/>
</dbReference>
<dbReference type="SUPFAM" id="SSF53178">
    <property type="entry name" value="Peptidyl-tRNA hydrolase-like"/>
    <property type="match status" value="1"/>
</dbReference>
<dbReference type="PROSITE" id="PS01195">
    <property type="entry name" value="PEPT_TRNA_HYDROL_1"/>
    <property type="match status" value="1"/>
</dbReference>
<dbReference type="PROSITE" id="PS01196">
    <property type="entry name" value="PEPT_TRNA_HYDROL_2"/>
    <property type="match status" value="1"/>
</dbReference>
<comment type="function">
    <text evidence="1">Hydrolyzes ribosome-free peptidyl-tRNAs (with 1 or more amino acids incorporated), which drop off the ribosome during protein synthesis, or as a result of ribosome stalling.</text>
</comment>
<comment type="function">
    <text evidence="1">Catalyzes the release of premature peptidyl moieties from peptidyl-tRNA molecules trapped in stalled 50S ribosomal subunits, and thus maintains levels of free tRNAs and 50S ribosomes.</text>
</comment>
<comment type="catalytic activity">
    <reaction evidence="1">
        <text>an N-acyl-L-alpha-aminoacyl-tRNA + H2O = an N-acyl-L-amino acid + a tRNA + H(+)</text>
        <dbReference type="Rhea" id="RHEA:54448"/>
        <dbReference type="Rhea" id="RHEA-COMP:10123"/>
        <dbReference type="Rhea" id="RHEA-COMP:13883"/>
        <dbReference type="ChEBI" id="CHEBI:15377"/>
        <dbReference type="ChEBI" id="CHEBI:15378"/>
        <dbReference type="ChEBI" id="CHEBI:59874"/>
        <dbReference type="ChEBI" id="CHEBI:78442"/>
        <dbReference type="ChEBI" id="CHEBI:138191"/>
        <dbReference type="EC" id="3.1.1.29"/>
    </reaction>
</comment>
<comment type="subunit">
    <text evidence="1">Monomer.</text>
</comment>
<comment type="subcellular location">
    <subcellularLocation>
        <location evidence="1">Cytoplasm</location>
    </subcellularLocation>
</comment>
<comment type="similarity">
    <text evidence="1">Belongs to the PTH family.</text>
</comment>
<protein>
    <recommendedName>
        <fullName evidence="1">Peptidyl-tRNA hydrolase</fullName>
        <shortName evidence="1">Pth</shortName>
        <ecNumber evidence="1">3.1.1.29</ecNumber>
    </recommendedName>
</protein>
<sequence length="199" mass="22080">MIKLIVGLGNPGAEYTATRHNAGFWLIDQLAREAGTTLRDERRFHGFYAKARLHGEEVHLLEPQTYMNRSGQSVVALAQFFKILPDQILVAHDELDLPPGTVKLKLGGGSGGHNGLKDITAHLSSQQYWRLRIGIGHPRDLIPESARAGAKPDVANFVLKPPRREEQDVIDASIERALAVMPMVVKGELDRATMQLHRN</sequence>
<reference key="1">
    <citation type="submission" date="2005-10" db="EMBL/GenBank/DDBJ databases">
        <title>Complete sequence of chromosome 1 of Burkholderia sp. 383.</title>
        <authorList>
            <consortium name="US DOE Joint Genome Institute"/>
            <person name="Copeland A."/>
            <person name="Lucas S."/>
            <person name="Lapidus A."/>
            <person name="Barry K."/>
            <person name="Detter J.C."/>
            <person name="Glavina T."/>
            <person name="Hammon N."/>
            <person name="Israni S."/>
            <person name="Pitluck S."/>
            <person name="Chain P."/>
            <person name="Malfatti S."/>
            <person name="Shin M."/>
            <person name="Vergez L."/>
            <person name="Schmutz J."/>
            <person name="Larimer F."/>
            <person name="Land M."/>
            <person name="Kyrpides N."/>
            <person name="Lykidis A."/>
            <person name="Richardson P."/>
        </authorList>
    </citation>
    <scope>NUCLEOTIDE SEQUENCE [LARGE SCALE GENOMIC DNA]</scope>
    <source>
        <strain>ATCC 17760 / DSM 23089 / LMG 22485 / NCIMB 9086 / R18194 / 383</strain>
    </source>
</reference>
<accession>Q39CT8</accession>
<evidence type="ECO:0000255" key="1">
    <source>
        <dbReference type="HAMAP-Rule" id="MF_00083"/>
    </source>
</evidence>
<keyword id="KW-0963">Cytoplasm</keyword>
<keyword id="KW-0378">Hydrolase</keyword>
<keyword id="KW-0694">RNA-binding</keyword>
<keyword id="KW-0820">tRNA-binding</keyword>
<proteinExistence type="inferred from homology"/>
<organism>
    <name type="scientific">Burkholderia lata (strain ATCC 17760 / DSM 23089 / LMG 22485 / NCIMB 9086 / R18194 / 383)</name>
    <dbReference type="NCBI Taxonomy" id="482957"/>
    <lineage>
        <taxon>Bacteria</taxon>
        <taxon>Pseudomonadati</taxon>
        <taxon>Pseudomonadota</taxon>
        <taxon>Betaproteobacteria</taxon>
        <taxon>Burkholderiales</taxon>
        <taxon>Burkholderiaceae</taxon>
        <taxon>Burkholderia</taxon>
        <taxon>Burkholderia cepacia complex</taxon>
    </lineage>
</organism>
<name>PTH_BURL3</name>